<protein>
    <recommendedName>
        <fullName evidence="1">Protein Turandot E</fullName>
    </recommendedName>
    <alternativeName>
        <fullName evidence="1">Protein Victoria</fullName>
    </alternativeName>
</protein>
<feature type="signal peptide" evidence="2">
    <location>
        <begin position="1"/>
        <end position="38"/>
    </location>
</feature>
<feature type="chain" id="PRO_0000354990" description="Protein Turandot E">
    <location>
        <begin position="39"/>
        <end position="134"/>
    </location>
</feature>
<sequence>MSYTRTVHSSTSILKMNSALQISCLLVVLGCLLGSGHCQSEAEFAAKSREIAQMFGNPSVDKYTKARNLPALLAFYEKYSSRLRLTPQERNSVNNAMRQYKAQRNQQVDGVSAQGGWLFDIIKSAISIIVKAVE</sequence>
<name>TOTE_DROSI</name>
<proteinExistence type="inferred from homology"/>
<accession>B4QAF1</accession>
<comment type="function">
    <text evidence="1">A humoral factor that may play a role in stress tolerance.</text>
</comment>
<comment type="subcellular location">
    <subcellularLocation>
        <location evidence="1">Secreted</location>
    </subcellularLocation>
</comment>
<comment type="similarity">
    <text evidence="2">Belongs to the Turandot family.</text>
</comment>
<comment type="sequence caution" evidence="3">
    <conflict type="erroneous initiation">
        <sequence resource="EMBL-CDS" id="EDX05568"/>
    </conflict>
</comment>
<gene>
    <name evidence="1" type="primary">TotE</name>
    <name evidence="1" type="synonym">Victoria</name>
    <name type="ORF">GD21728</name>
</gene>
<organism>
    <name type="scientific">Drosophila simulans</name>
    <name type="common">Fruit fly</name>
    <dbReference type="NCBI Taxonomy" id="7240"/>
    <lineage>
        <taxon>Eukaryota</taxon>
        <taxon>Metazoa</taxon>
        <taxon>Ecdysozoa</taxon>
        <taxon>Arthropoda</taxon>
        <taxon>Hexapoda</taxon>
        <taxon>Insecta</taxon>
        <taxon>Pterygota</taxon>
        <taxon>Neoptera</taxon>
        <taxon>Endopterygota</taxon>
        <taxon>Diptera</taxon>
        <taxon>Brachycera</taxon>
        <taxon>Muscomorpha</taxon>
        <taxon>Ephydroidea</taxon>
        <taxon>Drosophilidae</taxon>
        <taxon>Drosophila</taxon>
        <taxon>Sophophora</taxon>
    </lineage>
</organism>
<keyword id="KW-0391">Immunity</keyword>
<keyword id="KW-0399">Innate immunity</keyword>
<keyword id="KW-1185">Reference proteome</keyword>
<keyword id="KW-0964">Secreted</keyword>
<keyword id="KW-0732">Signal</keyword>
<reference evidence="4" key="1">
    <citation type="journal article" date="2007" name="Nature">
        <title>Evolution of genes and genomes on the Drosophila phylogeny.</title>
        <authorList>
            <consortium name="Drosophila 12 genomes consortium"/>
        </authorList>
    </citation>
    <scope>NUCLEOTIDE SEQUENCE [LARGE SCALE GENOMIC DNA]</scope>
</reference>
<dbReference type="EMBL" id="CM000361">
    <property type="protein sequence ID" value="EDX05568.1"/>
    <property type="status" value="ALT_INIT"/>
    <property type="molecule type" value="Genomic_DNA"/>
</dbReference>
<dbReference type="SMR" id="B4QAF1"/>
<dbReference type="STRING" id="7240.B4QAF1"/>
<dbReference type="EnsemblMetazoa" id="FBtr0221638">
    <property type="protein sequence ID" value="FBpp0220130"/>
    <property type="gene ID" value="FBgn0193150"/>
</dbReference>
<dbReference type="EnsemblMetazoa" id="XM_002079947.3">
    <property type="protein sequence ID" value="XP_002079983.3"/>
    <property type="gene ID" value="LOC6732878"/>
</dbReference>
<dbReference type="OrthoDB" id="7857971at2759"/>
<dbReference type="Proteomes" id="UP000000304">
    <property type="component" value="Chromosome 2L"/>
</dbReference>
<dbReference type="GO" id="GO:0005615">
    <property type="term" value="C:extracellular space"/>
    <property type="evidence" value="ECO:0000250"/>
    <property type="project" value="UniProtKB"/>
</dbReference>
<dbReference type="GO" id="GO:0034605">
    <property type="term" value="P:cellular response to heat"/>
    <property type="evidence" value="ECO:0007669"/>
    <property type="project" value="EnsemblMetazoa"/>
</dbReference>
<dbReference type="GO" id="GO:0034644">
    <property type="term" value="P:cellular response to UV"/>
    <property type="evidence" value="ECO:0007669"/>
    <property type="project" value="EnsemblMetazoa"/>
</dbReference>
<dbReference type="GO" id="GO:0045087">
    <property type="term" value="P:innate immune response"/>
    <property type="evidence" value="ECO:0007669"/>
    <property type="project" value="UniProtKB-KW"/>
</dbReference>
<dbReference type="GO" id="GO:0009617">
    <property type="term" value="P:response to bacterium"/>
    <property type="evidence" value="ECO:0007669"/>
    <property type="project" value="EnsemblMetazoa"/>
</dbReference>
<dbReference type="GO" id="GO:0009408">
    <property type="term" value="P:response to heat"/>
    <property type="evidence" value="ECO:0000250"/>
    <property type="project" value="UniProtKB"/>
</dbReference>
<dbReference type="InterPro" id="IPR010825">
    <property type="entry name" value="Turandot"/>
</dbReference>
<dbReference type="Pfam" id="PF07240">
    <property type="entry name" value="Turandot"/>
    <property type="match status" value="1"/>
</dbReference>
<evidence type="ECO:0000250" key="1">
    <source>
        <dbReference type="UniProtKB" id="Q8INV7"/>
    </source>
</evidence>
<evidence type="ECO:0000255" key="2"/>
<evidence type="ECO:0000305" key="3"/>
<evidence type="ECO:0000312" key="4">
    <source>
        <dbReference type="EMBL" id="EDX05568.1"/>
    </source>
</evidence>